<keyword id="KW-0687">Ribonucleoprotein</keyword>
<keyword id="KW-0689">Ribosomal protein</keyword>
<keyword id="KW-0694">RNA-binding</keyword>
<keyword id="KW-0699">rRNA-binding</keyword>
<accession>Q13DL2</accession>
<protein>
    <recommendedName>
        <fullName evidence="1">Large ribosomal subunit protein bL21</fullName>
    </recommendedName>
    <alternativeName>
        <fullName evidence="3">50S ribosomal protein L21</fullName>
    </alternativeName>
</protein>
<feature type="chain" id="PRO_0000270725" description="Large ribosomal subunit protein bL21">
    <location>
        <begin position="1"/>
        <end position="128"/>
    </location>
</feature>
<feature type="region of interest" description="Disordered" evidence="2">
    <location>
        <begin position="104"/>
        <end position="128"/>
    </location>
</feature>
<feature type="compositionally biased region" description="Low complexity" evidence="2">
    <location>
        <begin position="119"/>
        <end position="128"/>
    </location>
</feature>
<organism>
    <name type="scientific">Rhodopseudomonas palustris (strain BisB5)</name>
    <dbReference type="NCBI Taxonomy" id="316057"/>
    <lineage>
        <taxon>Bacteria</taxon>
        <taxon>Pseudomonadati</taxon>
        <taxon>Pseudomonadota</taxon>
        <taxon>Alphaproteobacteria</taxon>
        <taxon>Hyphomicrobiales</taxon>
        <taxon>Nitrobacteraceae</taxon>
        <taxon>Rhodopseudomonas</taxon>
    </lineage>
</organism>
<comment type="function">
    <text evidence="1">This protein binds to 23S rRNA in the presence of protein L20.</text>
</comment>
<comment type="subunit">
    <text evidence="1">Part of the 50S ribosomal subunit. Contacts protein L20.</text>
</comment>
<comment type="similarity">
    <text evidence="1">Belongs to the bacterial ribosomal protein bL21 family.</text>
</comment>
<proteinExistence type="inferred from homology"/>
<evidence type="ECO:0000255" key="1">
    <source>
        <dbReference type="HAMAP-Rule" id="MF_01363"/>
    </source>
</evidence>
<evidence type="ECO:0000256" key="2">
    <source>
        <dbReference type="SAM" id="MobiDB-lite"/>
    </source>
</evidence>
<evidence type="ECO:0000305" key="3"/>
<name>RL21_RHOPS</name>
<reference key="1">
    <citation type="submission" date="2006-03" db="EMBL/GenBank/DDBJ databases">
        <title>Complete sequence of Rhodopseudomonas palustris BisB5.</title>
        <authorList>
            <consortium name="US DOE Joint Genome Institute"/>
            <person name="Copeland A."/>
            <person name="Lucas S."/>
            <person name="Lapidus A."/>
            <person name="Barry K."/>
            <person name="Detter J.C."/>
            <person name="Glavina del Rio T."/>
            <person name="Hammon N."/>
            <person name="Israni S."/>
            <person name="Dalin E."/>
            <person name="Tice H."/>
            <person name="Pitluck S."/>
            <person name="Chain P."/>
            <person name="Malfatti S."/>
            <person name="Shin M."/>
            <person name="Vergez L."/>
            <person name="Schmutz J."/>
            <person name="Larimer F."/>
            <person name="Land M."/>
            <person name="Hauser L."/>
            <person name="Pelletier D.A."/>
            <person name="Kyrpides N."/>
            <person name="Lykidis A."/>
            <person name="Oda Y."/>
            <person name="Harwood C.S."/>
            <person name="Richardson P."/>
        </authorList>
    </citation>
    <scope>NUCLEOTIDE SEQUENCE [LARGE SCALE GENOMIC DNA]</scope>
    <source>
        <strain>BisB5</strain>
    </source>
</reference>
<sequence length="128" mass="13837">MFAVIKTGGRQYRVVPDDVLEVGKIEGEVGTIVQLGEVLMLGGDTPQLGLPTIAGASVAAEVLDHKRGPKVISFKKRRRKNSKRKRGYRDEITVLRITEILADGKKPSVGPRPKRVKAEPAPAADAAE</sequence>
<gene>
    <name evidence="1" type="primary">rplU</name>
    <name type="ordered locus">RPD_0589</name>
</gene>
<dbReference type="EMBL" id="CP000283">
    <property type="protein sequence ID" value="ABE37827.1"/>
    <property type="molecule type" value="Genomic_DNA"/>
</dbReference>
<dbReference type="SMR" id="Q13DL2"/>
<dbReference type="STRING" id="316057.RPD_0589"/>
<dbReference type="KEGG" id="rpd:RPD_0589"/>
<dbReference type="eggNOG" id="COG0261">
    <property type="taxonomic scope" value="Bacteria"/>
</dbReference>
<dbReference type="HOGENOM" id="CLU_061463_1_2_5"/>
<dbReference type="BioCyc" id="RPAL316057:RPD_RS03020-MONOMER"/>
<dbReference type="Proteomes" id="UP000001818">
    <property type="component" value="Chromosome"/>
</dbReference>
<dbReference type="GO" id="GO:0005737">
    <property type="term" value="C:cytoplasm"/>
    <property type="evidence" value="ECO:0007669"/>
    <property type="project" value="UniProtKB-ARBA"/>
</dbReference>
<dbReference type="GO" id="GO:1990904">
    <property type="term" value="C:ribonucleoprotein complex"/>
    <property type="evidence" value="ECO:0007669"/>
    <property type="project" value="UniProtKB-KW"/>
</dbReference>
<dbReference type="GO" id="GO:0005840">
    <property type="term" value="C:ribosome"/>
    <property type="evidence" value="ECO:0007669"/>
    <property type="project" value="UniProtKB-KW"/>
</dbReference>
<dbReference type="GO" id="GO:0019843">
    <property type="term" value="F:rRNA binding"/>
    <property type="evidence" value="ECO:0007669"/>
    <property type="project" value="UniProtKB-UniRule"/>
</dbReference>
<dbReference type="GO" id="GO:0003735">
    <property type="term" value="F:structural constituent of ribosome"/>
    <property type="evidence" value="ECO:0007669"/>
    <property type="project" value="InterPro"/>
</dbReference>
<dbReference type="GO" id="GO:0006412">
    <property type="term" value="P:translation"/>
    <property type="evidence" value="ECO:0007669"/>
    <property type="project" value="UniProtKB-UniRule"/>
</dbReference>
<dbReference type="HAMAP" id="MF_01363">
    <property type="entry name" value="Ribosomal_bL21"/>
    <property type="match status" value="1"/>
</dbReference>
<dbReference type="InterPro" id="IPR028909">
    <property type="entry name" value="bL21-like"/>
</dbReference>
<dbReference type="InterPro" id="IPR036164">
    <property type="entry name" value="bL21-like_sf"/>
</dbReference>
<dbReference type="InterPro" id="IPR001787">
    <property type="entry name" value="Ribosomal_bL21"/>
</dbReference>
<dbReference type="NCBIfam" id="TIGR00061">
    <property type="entry name" value="L21"/>
    <property type="match status" value="1"/>
</dbReference>
<dbReference type="PANTHER" id="PTHR21349">
    <property type="entry name" value="50S RIBOSOMAL PROTEIN L21"/>
    <property type="match status" value="1"/>
</dbReference>
<dbReference type="PANTHER" id="PTHR21349:SF0">
    <property type="entry name" value="LARGE RIBOSOMAL SUBUNIT PROTEIN BL21M"/>
    <property type="match status" value="1"/>
</dbReference>
<dbReference type="Pfam" id="PF00829">
    <property type="entry name" value="Ribosomal_L21p"/>
    <property type="match status" value="1"/>
</dbReference>
<dbReference type="SUPFAM" id="SSF141091">
    <property type="entry name" value="L21p-like"/>
    <property type="match status" value="1"/>
</dbReference>